<reference key="1">
    <citation type="submission" date="2007-09" db="EMBL/GenBank/DDBJ databases">
        <title>Complete genome sequencing of Rickettsia bellii.</title>
        <authorList>
            <person name="Madan A."/>
            <person name="Lee H."/>
            <person name="Madan A."/>
            <person name="Yoon J.-G."/>
            <person name="Ryu G.-Y."/>
            <person name="Dasch G."/>
            <person name="Ereemeva M."/>
        </authorList>
    </citation>
    <scope>NUCLEOTIDE SEQUENCE [LARGE SCALE GENOMIC DNA]</scope>
    <source>
        <strain>OSU 85-389</strain>
    </source>
</reference>
<keyword id="KW-0066">ATP synthesis</keyword>
<keyword id="KW-0997">Cell inner membrane</keyword>
<keyword id="KW-1003">Cell membrane</keyword>
<keyword id="KW-0139">CF(1)</keyword>
<keyword id="KW-0375">Hydrogen ion transport</keyword>
<keyword id="KW-0406">Ion transport</keyword>
<keyword id="KW-0472">Membrane</keyword>
<keyword id="KW-0813">Transport</keyword>
<comment type="function">
    <text evidence="1">Produces ATP from ADP in the presence of a proton gradient across the membrane.</text>
</comment>
<comment type="subunit">
    <text evidence="1">F-type ATPases have 2 components, CF(1) - the catalytic core - and CF(0) - the membrane proton channel. CF(1) has five subunits: alpha(3), beta(3), gamma(1), delta(1), epsilon(1). CF(0) has three main subunits: a, b and c.</text>
</comment>
<comment type="subcellular location">
    <subcellularLocation>
        <location evidence="1">Cell inner membrane</location>
        <topology evidence="1">Peripheral membrane protein</topology>
    </subcellularLocation>
</comment>
<comment type="similarity">
    <text evidence="1">Belongs to the ATPase epsilon chain family.</text>
</comment>
<accession>A8GY39</accession>
<dbReference type="EMBL" id="CP000849">
    <property type="protein sequence ID" value="ABV79789.1"/>
    <property type="molecule type" value="Genomic_DNA"/>
</dbReference>
<dbReference type="RefSeq" id="WP_011476793.1">
    <property type="nucleotide sequence ID" value="NC_009883.1"/>
</dbReference>
<dbReference type="SMR" id="A8GY39"/>
<dbReference type="KEGG" id="rbo:A1I_07455"/>
<dbReference type="HOGENOM" id="CLU_084338_2_1_5"/>
<dbReference type="GO" id="GO:0005886">
    <property type="term" value="C:plasma membrane"/>
    <property type="evidence" value="ECO:0007669"/>
    <property type="project" value="UniProtKB-SubCell"/>
</dbReference>
<dbReference type="GO" id="GO:0045259">
    <property type="term" value="C:proton-transporting ATP synthase complex"/>
    <property type="evidence" value="ECO:0007669"/>
    <property type="project" value="UniProtKB-KW"/>
</dbReference>
<dbReference type="GO" id="GO:0005524">
    <property type="term" value="F:ATP binding"/>
    <property type="evidence" value="ECO:0007669"/>
    <property type="project" value="UniProtKB-UniRule"/>
</dbReference>
<dbReference type="GO" id="GO:0046933">
    <property type="term" value="F:proton-transporting ATP synthase activity, rotational mechanism"/>
    <property type="evidence" value="ECO:0007669"/>
    <property type="project" value="UniProtKB-UniRule"/>
</dbReference>
<dbReference type="CDD" id="cd12152">
    <property type="entry name" value="F1-ATPase_delta"/>
    <property type="match status" value="1"/>
</dbReference>
<dbReference type="Gene3D" id="2.60.15.10">
    <property type="entry name" value="F0F1 ATP synthase delta/epsilon subunit, N-terminal"/>
    <property type="match status" value="1"/>
</dbReference>
<dbReference type="HAMAP" id="MF_00530">
    <property type="entry name" value="ATP_synth_epsil_bac"/>
    <property type="match status" value="1"/>
</dbReference>
<dbReference type="InterPro" id="IPR001469">
    <property type="entry name" value="ATP_synth_F1_dsu/esu"/>
</dbReference>
<dbReference type="InterPro" id="IPR020546">
    <property type="entry name" value="ATP_synth_F1_dsu/esu_N"/>
</dbReference>
<dbReference type="InterPro" id="IPR036771">
    <property type="entry name" value="ATPsynth_dsu/esu_N"/>
</dbReference>
<dbReference type="NCBIfam" id="TIGR01216">
    <property type="entry name" value="ATP_synt_epsi"/>
    <property type="match status" value="1"/>
</dbReference>
<dbReference type="NCBIfam" id="NF002403">
    <property type="entry name" value="PRK01474.1"/>
    <property type="match status" value="1"/>
</dbReference>
<dbReference type="PANTHER" id="PTHR13822">
    <property type="entry name" value="ATP SYNTHASE DELTA/EPSILON CHAIN"/>
    <property type="match status" value="1"/>
</dbReference>
<dbReference type="PANTHER" id="PTHR13822:SF10">
    <property type="entry name" value="ATP SYNTHASE EPSILON CHAIN, CHLOROPLASTIC"/>
    <property type="match status" value="1"/>
</dbReference>
<dbReference type="Pfam" id="PF02823">
    <property type="entry name" value="ATP-synt_DE_N"/>
    <property type="match status" value="1"/>
</dbReference>
<dbReference type="SUPFAM" id="SSF51344">
    <property type="entry name" value="Epsilon subunit of F1F0-ATP synthase N-terminal domain"/>
    <property type="match status" value="1"/>
</dbReference>
<organism>
    <name type="scientific">Rickettsia bellii (strain OSU 85-389)</name>
    <dbReference type="NCBI Taxonomy" id="391896"/>
    <lineage>
        <taxon>Bacteria</taxon>
        <taxon>Pseudomonadati</taxon>
        <taxon>Pseudomonadota</taxon>
        <taxon>Alphaproteobacteria</taxon>
        <taxon>Rickettsiales</taxon>
        <taxon>Rickettsiaceae</taxon>
        <taxon>Rickettsieae</taxon>
        <taxon>Rickettsia</taxon>
        <taxon>belli group</taxon>
    </lineage>
</organism>
<protein>
    <recommendedName>
        <fullName evidence="1">ATP synthase epsilon chain</fullName>
    </recommendedName>
    <alternativeName>
        <fullName evidence="1">ATP synthase F1 sector epsilon subunit</fullName>
    </alternativeName>
    <alternativeName>
        <fullName evidence="1">F-ATPase epsilon subunit</fullName>
    </alternativeName>
</protein>
<feature type="chain" id="PRO_1000056527" description="ATP synthase epsilon chain">
    <location>
        <begin position="1"/>
        <end position="108"/>
    </location>
</feature>
<sequence length="108" mass="11787">MSETINVKIITPLNIVFEEQAKMITLPGEEGEFGVLQGHAPMIVSLKAGLLKVYIDDMHKPKITYLIANGVTEVTGSYINIATETAINITDLSEAEIENKLTALQKSI</sequence>
<gene>
    <name evidence="1" type="primary">atpC</name>
    <name type="ordered locus">A1I_07455</name>
</gene>
<proteinExistence type="inferred from homology"/>
<name>ATPE_RICB8</name>
<evidence type="ECO:0000255" key="1">
    <source>
        <dbReference type="HAMAP-Rule" id="MF_00530"/>
    </source>
</evidence>